<organism>
    <name type="scientific">Corynebacterium glutamicum (strain ATCC 13032 / DSM 20300 / JCM 1318 / BCRC 11384 / CCUG 27702 / LMG 3730 / NBRC 12168 / NCIMB 10025 / NRRL B-2784 / 534)</name>
    <dbReference type="NCBI Taxonomy" id="196627"/>
    <lineage>
        <taxon>Bacteria</taxon>
        <taxon>Bacillati</taxon>
        <taxon>Actinomycetota</taxon>
        <taxon>Actinomycetes</taxon>
        <taxon>Mycobacteriales</taxon>
        <taxon>Corynebacteriaceae</taxon>
        <taxon>Corynebacterium</taxon>
    </lineage>
</organism>
<gene>
    <name evidence="1" type="primary">truB</name>
    <name type="ordered locus">Cgl1979</name>
    <name type="ordered locus">cg2170</name>
</gene>
<keyword id="KW-0413">Isomerase</keyword>
<keyword id="KW-1185">Reference proteome</keyword>
<keyword id="KW-0819">tRNA processing</keyword>
<evidence type="ECO:0000255" key="1">
    <source>
        <dbReference type="HAMAP-Rule" id="MF_01080"/>
    </source>
</evidence>
<protein>
    <recommendedName>
        <fullName evidence="1">tRNA pseudouridine synthase B</fullName>
        <ecNumber evidence="1">5.4.99.25</ecNumber>
    </recommendedName>
    <alternativeName>
        <fullName evidence="1">tRNA pseudouridine(55) synthase</fullName>
        <shortName evidence="1">Psi55 synthase</shortName>
    </alternativeName>
    <alternativeName>
        <fullName evidence="1">tRNA pseudouridylate synthase</fullName>
    </alternativeName>
    <alternativeName>
        <fullName evidence="1">tRNA-uridine isomerase</fullName>
    </alternativeName>
</protein>
<proteinExistence type="inferred from homology"/>
<comment type="function">
    <text evidence="1">Responsible for synthesis of pseudouridine from uracil-55 in the psi GC loop of transfer RNAs.</text>
</comment>
<comment type="catalytic activity">
    <reaction evidence="1">
        <text>uridine(55) in tRNA = pseudouridine(55) in tRNA</text>
        <dbReference type="Rhea" id="RHEA:42532"/>
        <dbReference type="Rhea" id="RHEA-COMP:10101"/>
        <dbReference type="Rhea" id="RHEA-COMP:10102"/>
        <dbReference type="ChEBI" id="CHEBI:65314"/>
        <dbReference type="ChEBI" id="CHEBI:65315"/>
        <dbReference type="EC" id="5.4.99.25"/>
    </reaction>
</comment>
<comment type="similarity">
    <text evidence="1">Belongs to the pseudouridine synthase TruB family. Type 1 subfamily.</text>
</comment>
<reference key="1">
    <citation type="journal article" date="2003" name="Appl. Microbiol. Biotechnol.">
        <title>The Corynebacterium glutamicum genome: features and impacts on biotechnological processes.</title>
        <authorList>
            <person name="Ikeda M."/>
            <person name="Nakagawa S."/>
        </authorList>
    </citation>
    <scope>NUCLEOTIDE SEQUENCE [LARGE SCALE GENOMIC DNA]</scope>
    <source>
        <strain>ATCC 13032 / DSM 20300 / JCM 1318 / BCRC 11384 / CCUG 27702 / LMG 3730 / NBRC 12168 / NCIMB 10025 / NRRL B-2784 / 534</strain>
    </source>
</reference>
<reference key="2">
    <citation type="journal article" date="2003" name="J. Biotechnol.">
        <title>The complete Corynebacterium glutamicum ATCC 13032 genome sequence and its impact on the production of L-aspartate-derived amino acids and vitamins.</title>
        <authorList>
            <person name="Kalinowski J."/>
            <person name="Bathe B."/>
            <person name="Bartels D."/>
            <person name="Bischoff N."/>
            <person name="Bott M."/>
            <person name="Burkovski A."/>
            <person name="Dusch N."/>
            <person name="Eggeling L."/>
            <person name="Eikmanns B.J."/>
            <person name="Gaigalat L."/>
            <person name="Goesmann A."/>
            <person name="Hartmann M."/>
            <person name="Huthmacher K."/>
            <person name="Kraemer R."/>
            <person name="Linke B."/>
            <person name="McHardy A.C."/>
            <person name="Meyer F."/>
            <person name="Moeckel B."/>
            <person name="Pfefferle W."/>
            <person name="Puehler A."/>
            <person name="Rey D.A."/>
            <person name="Rueckert C."/>
            <person name="Rupp O."/>
            <person name="Sahm H."/>
            <person name="Wendisch V.F."/>
            <person name="Wiegraebe I."/>
            <person name="Tauch A."/>
        </authorList>
    </citation>
    <scope>NUCLEOTIDE SEQUENCE [LARGE SCALE GENOMIC DNA]</scope>
    <source>
        <strain>ATCC 13032 / DSM 20300 / JCM 1318 / BCRC 11384 / CCUG 27702 / LMG 3730 / NBRC 12168 / NCIMB 10025 / NRRL B-2784 / 534</strain>
    </source>
</reference>
<sequence>MNAPAPKPGLVIVDKPAGMTSHDVVSKLRRAFSTRKVGHAGTLDPMATGVLVVGIERGTRFLAHMVASTKAYDATIRLGAATSTDDAEGEVISTTDASGLDHSTILAEIVNLTGDIMQKPTKVSAIKIDGKRAHERVRDGEEVDIPARPVTVSVFDVLDYHVDGEFYDLDVRVHCSSGTYIRALARDLGNALQVGGHLTALRRTEVGPFTLNDATPLSKLQENPELSLNLDQALTRSYPVLDITEDEGVDLSMGKWLEPRGLKGVHAAVTPSGKAVALIEEKGKRLATVFVAHPNTL</sequence>
<feature type="chain" id="PRO_0000121825" description="tRNA pseudouridine synthase B">
    <location>
        <begin position="1"/>
        <end position="297"/>
    </location>
</feature>
<feature type="active site" description="Nucleophile" evidence="1">
    <location>
        <position position="44"/>
    </location>
</feature>
<name>TRUB_CORGL</name>
<dbReference type="EC" id="5.4.99.25" evidence="1"/>
<dbReference type="EMBL" id="BA000036">
    <property type="protein sequence ID" value="BAB99372.1"/>
    <property type="molecule type" value="Genomic_DNA"/>
</dbReference>
<dbReference type="EMBL" id="BX927153">
    <property type="protein sequence ID" value="CAF20320.1"/>
    <property type="molecule type" value="Genomic_DNA"/>
</dbReference>
<dbReference type="RefSeq" id="NP_601185.1">
    <property type="nucleotide sequence ID" value="NC_003450.3"/>
</dbReference>
<dbReference type="RefSeq" id="WP_011014799.1">
    <property type="nucleotide sequence ID" value="NC_006958.1"/>
</dbReference>
<dbReference type="SMR" id="Q8NP46"/>
<dbReference type="STRING" id="196627.cg2170"/>
<dbReference type="GeneID" id="1019936"/>
<dbReference type="KEGG" id="cgb:cg2170"/>
<dbReference type="KEGG" id="cgl:Cgl1979"/>
<dbReference type="PATRIC" id="fig|196627.13.peg.1917"/>
<dbReference type="eggNOG" id="COG0130">
    <property type="taxonomic scope" value="Bacteria"/>
</dbReference>
<dbReference type="HOGENOM" id="CLU_032087_0_0_11"/>
<dbReference type="OrthoDB" id="9802309at2"/>
<dbReference type="BioCyc" id="CORYNE:G18NG-11571-MONOMER"/>
<dbReference type="Proteomes" id="UP000000582">
    <property type="component" value="Chromosome"/>
</dbReference>
<dbReference type="Proteomes" id="UP000001009">
    <property type="component" value="Chromosome"/>
</dbReference>
<dbReference type="GO" id="GO:0003723">
    <property type="term" value="F:RNA binding"/>
    <property type="evidence" value="ECO:0007669"/>
    <property type="project" value="InterPro"/>
</dbReference>
<dbReference type="GO" id="GO:0160148">
    <property type="term" value="F:tRNA pseudouridine(55) synthase activity"/>
    <property type="evidence" value="ECO:0007669"/>
    <property type="project" value="UniProtKB-EC"/>
</dbReference>
<dbReference type="GO" id="GO:1990481">
    <property type="term" value="P:mRNA pseudouridine synthesis"/>
    <property type="evidence" value="ECO:0007669"/>
    <property type="project" value="TreeGrafter"/>
</dbReference>
<dbReference type="GO" id="GO:0031119">
    <property type="term" value="P:tRNA pseudouridine synthesis"/>
    <property type="evidence" value="ECO:0007669"/>
    <property type="project" value="UniProtKB-UniRule"/>
</dbReference>
<dbReference type="CDD" id="cd02573">
    <property type="entry name" value="PseudoU_synth_EcTruB"/>
    <property type="match status" value="1"/>
</dbReference>
<dbReference type="FunFam" id="3.30.2350.10:FF:000011">
    <property type="entry name" value="tRNA pseudouridine synthase B"/>
    <property type="match status" value="1"/>
</dbReference>
<dbReference type="Gene3D" id="3.30.2350.10">
    <property type="entry name" value="Pseudouridine synthase"/>
    <property type="match status" value="1"/>
</dbReference>
<dbReference type="Gene3D" id="2.30.130.10">
    <property type="entry name" value="PUA domain"/>
    <property type="match status" value="1"/>
</dbReference>
<dbReference type="HAMAP" id="MF_01080">
    <property type="entry name" value="TruB_bact"/>
    <property type="match status" value="1"/>
</dbReference>
<dbReference type="InterPro" id="IPR020103">
    <property type="entry name" value="PsdUridine_synth_cat_dom_sf"/>
</dbReference>
<dbReference type="InterPro" id="IPR002501">
    <property type="entry name" value="PsdUridine_synth_N"/>
</dbReference>
<dbReference type="InterPro" id="IPR015947">
    <property type="entry name" value="PUA-like_sf"/>
</dbReference>
<dbReference type="InterPro" id="IPR036974">
    <property type="entry name" value="PUA_sf"/>
</dbReference>
<dbReference type="InterPro" id="IPR015225">
    <property type="entry name" value="tRNA_psdUridine_synth_fam2_C"/>
</dbReference>
<dbReference type="InterPro" id="IPR014780">
    <property type="entry name" value="tRNA_psdUridine_synth_TruB"/>
</dbReference>
<dbReference type="InterPro" id="IPR032819">
    <property type="entry name" value="TruB_C"/>
</dbReference>
<dbReference type="NCBIfam" id="TIGR00431">
    <property type="entry name" value="TruB"/>
    <property type="match status" value="1"/>
</dbReference>
<dbReference type="PANTHER" id="PTHR13767:SF2">
    <property type="entry name" value="PSEUDOURIDYLATE SYNTHASE TRUB1"/>
    <property type="match status" value="1"/>
</dbReference>
<dbReference type="PANTHER" id="PTHR13767">
    <property type="entry name" value="TRNA-PSEUDOURIDINE SYNTHASE"/>
    <property type="match status" value="1"/>
</dbReference>
<dbReference type="Pfam" id="PF09142">
    <property type="entry name" value="TruB_C"/>
    <property type="match status" value="1"/>
</dbReference>
<dbReference type="Pfam" id="PF16198">
    <property type="entry name" value="TruB_C_2"/>
    <property type="match status" value="1"/>
</dbReference>
<dbReference type="Pfam" id="PF01509">
    <property type="entry name" value="TruB_N"/>
    <property type="match status" value="1"/>
</dbReference>
<dbReference type="SUPFAM" id="SSF55120">
    <property type="entry name" value="Pseudouridine synthase"/>
    <property type="match status" value="1"/>
</dbReference>
<dbReference type="SUPFAM" id="SSF88697">
    <property type="entry name" value="PUA domain-like"/>
    <property type="match status" value="1"/>
</dbReference>
<accession>Q8NP46</accession>